<proteinExistence type="predicted"/>
<dbReference type="EMBL" id="EF432053">
    <property type="protein sequence ID" value="ABP73414.1"/>
    <property type="molecule type" value="Genomic_DNA"/>
</dbReference>
<dbReference type="RefSeq" id="YP_001210328.1">
    <property type="nucleotide sequence ID" value="NC_009452.1"/>
</dbReference>
<dbReference type="SMR" id="A4ZUB0"/>
<dbReference type="GeneID" id="5129803"/>
<dbReference type="KEGG" id="vg:5129803"/>
<dbReference type="Proteomes" id="UP000000513">
    <property type="component" value="Segment"/>
</dbReference>
<sequence length="257" mass="30162">MGEQVLDFRGLFDERGNPITKRKKAVEQVEEVVTPEEKTKVVTVEKPVYIPVEKRKLKRKITFAPEDSLSTDDVFAPRVYYDYNFSPFDFLSRSRTFAPRMSYDYEYAPEDFSSYSEVYSPSESYDDTFAPKYRNFRKSVYSPSTVIKNKFAPKVTQRIKFKPRLFDKLLAIFAPESILKTKENVKYKPYNYQYQETAIIDTYNPEQITTVEKFSPKDESNFNLRIAPETDFSIKLSPPPISFTSVDYYGILKKIIR</sequence>
<gene>
    <name type="ORF">ORF257</name>
</gene>
<protein>
    <recommendedName>
        <fullName>Uncharacterized protein ORF257</fullName>
    </recommendedName>
</protein>
<organism>
    <name type="scientific">Acidianus bottle-shaped virus (isolate Italy/Pozzuoli)</name>
    <name type="common">ABV</name>
    <dbReference type="NCBI Taxonomy" id="654911"/>
    <lineage>
        <taxon>Viruses</taxon>
        <taxon>Viruses incertae sedis</taxon>
        <taxon>Ampullaviridae</taxon>
        <taxon>Bottigliavirus</taxon>
        <taxon>Bottigliavirus ABV</taxon>
    </lineage>
</organism>
<reference key="1">
    <citation type="journal article" date="2007" name="Virology">
        <title>Genome of the Acidianus bottle-shaped virus and insights into the replication and packaging mechanisms.</title>
        <authorList>
            <person name="Peng X."/>
            <person name="Basta T."/>
            <person name="Haring M."/>
            <person name="Garrett R.A."/>
            <person name="Prangishvili D."/>
        </authorList>
    </citation>
    <scope>NUCLEOTIDE SEQUENCE [GENOMIC DNA]</scope>
</reference>
<feature type="chain" id="PRO_0000384867" description="Uncharacterized protein ORF257">
    <location>
        <begin position="1"/>
        <end position="257"/>
    </location>
</feature>
<organismHost>
    <name type="scientific">Acidianus convivator</name>
    <dbReference type="NCBI Taxonomy" id="269667"/>
</organismHost>
<name>Y257_ABVP</name>
<keyword id="KW-1185">Reference proteome</keyword>
<accession>A4ZUB0</accession>